<organism>
    <name type="scientific">Beijerinckia indica subsp. indica (strain ATCC 9039 / DSM 1715 / NCIMB 8712)</name>
    <dbReference type="NCBI Taxonomy" id="395963"/>
    <lineage>
        <taxon>Bacteria</taxon>
        <taxon>Pseudomonadati</taxon>
        <taxon>Pseudomonadota</taxon>
        <taxon>Alphaproteobacteria</taxon>
        <taxon>Hyphomicrobiales</taxon>
        <taxon>Beijerinckiaceae</taxon>
        <taxon>Beijerinckia</taxon>
    </lineage>
</organism>
<evidence type="ECO:0000255" key="1">
    <source>
        <dbReference type="HAMAP-Rule" id="MF_01416"/>
    </source>
</evidence>
<proteinExistence type="inferred from homology"/>
<feature type="chain" id="PRO_0000370900" description="ATP synthase subunit delta">
    <location>
        <begin position="1"/>
        <end position="190"/>
    </location>
</feature>
<gene>
    <name evidence="1" type="primary">atpH</name>
    <name type="ordered locus">Bind_0221</name>
</gene>
<dbReference type="EMBL" id="CP001016">
    <property type="protein sequence ID" value="ACB93877.1"/>
    <property type="molecule type" value="Genomic_DNA"/>
</dbReference>
<dbReference type="RefSeq" id="WP_012383235.1">
    <property type="nucleotide sequence ID" value="NC_010581.1"/>
</dbReference>
<dbReference type="SMR" id="B2ICI8"/>
<dbReference type="STRING" id="395963.Bind_0221"/>
<dbReference type="KEGG" id="bid:Bind_0221"/>
<dbReference type="eggNOG" id="COG0712">
    <property type="taxonomic scope" value="Bacteria"/>
</dbReference>
<dbReference type="HOGENOM" id="CLU_085114_0_1_5"/>
<dbReference type="OrthoDB" id="9796185at2"/>
<dbReference type="Proteomes" id="UP000001695">
    <property type="component" value="Chromosome"/>
</dbReference>
<dbReference type="GO" id="GO:0005886">
    <property type="term" value="C:plasma membrane"/>
    <property type="evidence" value="ECO:0007669"/>
    <property type="project" value="UniProtKB-SubCell"/>
</dbReference>
<dbReference type="GO" id="GO:0045259">
    <property type="term" value="C:proton-transporting ATP synthase complex"/>
    <property type="evidence" value="ECO:0007669"/>
    <property type="project" value="UniProtKB-KW"/>
</dbReference>
<dbReference type="GO" id="GO:0046933">
    <property type="term" value="F:proton-transporting ATP synthase activity, rotational mechanism"/>
    <property type="evidence" value="ECO:0007669"/>
    <property type="project" value="UniProtKB-UniRule"/>
</dbReference>
<dbReference type="Gene3D" id="1.10.520.20">
    <property type="entry name" value="N-terminal domain of the delta subunit of the F1F0-ATP synthase"/>
    <property type="match status" value="1"/>
</dbReference>
<dbReference type="HAMAP" id="MF_01416">
    <property type="entry name" value="ATP_synth_delta_bact"/>
    <property type="match status" value="1"/>
</dbReference>
<dbReference type="InterPro" id="IPR026015">
    <property type="entry name" value="ATP_synth_OSCP/delta_N_sf"/>
</dbReference>
<dbReference type="InterPro" id="IPR020781">
    <property type="entry name" value="ATPase_OSCP/d_CS"/>
</dbReference>
<dbReference type="InterPro" id="IPR000711">
    <property type="entry name" value="ATPase_OSCP/dsu"/>
</dbReference>
<dbReference type="NCBIfam" id="TIGR01145">
    <property type="entry name" value="ATP_synt_delta"/>
    <property type="match status" value="1"/>
</dbReference>
<dbReference type="NCBIfam" id="NF004402">
    <property type="entry name" value="PRK05758.2-2"/>
    <property type="match status" value="1"/>
</dbReference>
<dbReference type="NCBIfam" id="NF004406">
    <property type="entry name" value="PRK05758.3-2"/>
    <property type="match status" value="1"/>
</dbReference>
<dbReference type="PANTHER" id="PTHR11910">
    <property type="entry name" value="ATP SYNTHASE DELTA CHAIN"/>
    <property type="match status" value="1"/>
</dbReference>
<dbReference type="Pfam" id="PF00213">
    <property type="entry name" value="OSCP"/>
    <property type="match status" value="1"/>
</dbReference>
<dbReference type="PRINTS" id="PR00125">
    <property type="entry name" value="ATPASEDELTA"/>
</dbReference>
<dbReference type="SUPFAM" id="SSF47928">
    <property type="entry name" value="N-terminal domain of the delta subunit of the F1F0-ATP synthase"/>
    <property type="match status" value="1"/>
</dbReference>
<dbReference type="PROSITE" id="PS00389">
    <property type="entry name" value="ATPASE_DELTA"/>
    <property type="match status" value="1"/>
</dbReference>
<protein>
    <recommendedName>
        <fullName evidence="1">ATP synthase subunit delta</fullName>
    </recommendedName>
    <alternativeName>
        <fullName evidence="1">ATP synthase F(1) sector subunit delta</fullName>
    </alternativeName>
    <alternativeName>
        <fullName evidence="1">F-type ATPase subunit delta</fullName>
        <shortName evidence="1">F-ATPase subunit delta</shortName>
    </alternativeName>
</protein>
<name>ATPD_BEII9</name>
<accession>B2ICI8</accession>
<keyword id="KW-0066">ATP synthesis</keyword>
<keyword id="KW-0997">Cell inner membrane</keyword>
<keyword id="KW-1003">Cell membrane</keyword>
<keyword id="KW-0139">CF(1)</keyword>
<keyword id="KW-0375">Hydrogen ion transport</keyword>
<keyword id="KW-0406">Ion transport</keyword>
<keyword id="KW-0472">Membrane</keyword>
<keyword id="KW-1185">Reference proteome</keyword>
<keyword id="KW-0813">Transport</keyword>
<sequence length="190" mass="20562">MGSVAVEETIVTGMAGRYAQALFSLAKESGTIDQVASDLQRLREIYRESEDLQRFIGSPAFSSEIQVKVLNALLNKVEITGLAANFIKLVAFKRRLFGLPKMIDDFNHLRDVEYGIVRATVTSAAPLKDEQLETLKGVLAAQGGGKSVEIAAKVDPALIGGLIVQLGSRMVDGSLKTKLNAIRTRMKEVG</sequence>
<reference key="1">
    <citation type="journal article" date="2010" name="J. Bacteriol.">
        <title>Complete genome sequence of Beijerinckia indica subsp. indica.</title>
        <authorList>
            <person name="Tamas I."/>
            <person name="Dedysh S.N."/>
            <person name="Liesack W."/>
            <person name="Stott M.B."/>
            <person name="Alam M."/>
            <person name="Murrell J.C."/>
            <person name="Dunfield P.F."/>
        </authorList>
    </citation>
    <scope>NUCLEOTIDE SEQUENCE [LARGE SCALE GENOMIC DNA]</scope>
    <source>
        <strain>ATCC 9039 / DSM 1715 / NCIMB 8712</strain>
    </source>
</reference>
<comment type="function">
    <text evidence="1">F(1)F(0) ATP synthase produces ATP from ADP in the presence of a proton or sodium gradient. F-type ATPases consist of two structural domains, F(1) containing the extramembraneous catalytic core and F(0) containing the membrane proton channel, linked together by a central stalk and a peripheral stalk. During catalysis, ATP synthesis in the catalytic domain of F(1) is coupled via a rotary mechanism of the central stalk subunits to proton translocation.</text>
</comment>
<comment type="function">
    <text evidence="1">This protein is part of the stalk that links CF(0) to CF(1). It either transmits conformational changes from CF(0) to CF(1) or is implicated in proton conduction.</text>
</comment>
<comment type="subunit">
    <text evidence="1">F-type ATPases have 2 components, F(1) - the catalytic core - and F(0) - the membrane proton channel. F(1) has five subunits: alpha(3), beta(3), gamma(1), delta(1), epsilon(1). F(0) has three main subunits: a(1), b(2) and c(10-14). The alpha and beta chains form an alternating ring which encloses part of the gamma chain. F(1) is attached to F(0) by a central stalk formed by the gamma and epsilon chains, while a peripheral stalk is formed by the delta and b chains.</text>
</comment>
<comment type="subcellular location">
    <subcellularLocation>
        <location evidence="1">Cell inner membrane</location>
        <topology evidence="1">Peripheral membrane protein</topology>
    </subcellularLocation>
</comment>
<comment type="similarity">
    <text evidence="1">Belongs to the ATPase delta chain family.</text>
</comment>